<dbReference type="EMBL" id="AE005174">
    <property type="protein sequence ID" value="AAG59456.1"/>
    <property type="status" value="ALT_INIT"/>
    <property type="molecule type" value="Genomic_DNA"/>
</dbReference>
<dbReference type="EMBL" id="BA000007">
    <property type="protein sequence ID" value="BAB38657.1"/>
    <property type="molecule type" value="Genomic_DNA"/>
</dbReference>
<dbReference type="PIR" id="B91283">
    <property type="entry name" value="B91283"/>
</dbReference>
<dbReference type="PIR" id="D86124">
    <property type="entry name" value="D86124"/>
</dbReference>
<dbReference type="RefSeq" id="NP_313261.1">
    <property type="nucleotide sequence ID" value="NC_002695.1"/>
</dbReference>
<dbReference type="RefSeq" id="WP_000079623.1">
    <property type="nucleotide sequence ID" value="NZ_SEKU01000001.1"/>
</dbReference>
<dbReference type="STRING" id="155864.Z5869"/>
<dbReference type="GeneID" id="913808"/>
<dbReference type="KEGG" id="ece:Z5869"/>
<dbReference type="KEGG" id="ecs:ECs_5234"/>
<dbReference type="PATRIC" id="fig|386585.9.peg.5471"/>
<dbReference type="eggNOG" id="COG4269">
    <property type="taxonomic scope" value="Bacteria"/>
</dbReference>
<dbReference type="HOGENOM" id="CLU_049287_2_0_6"/>
<dbReference type="OMA" id="EYFRIWI"/>
<dbReference type="Proteomes" id="UP000000558">
    <property type="component" value="Chromosome"/>
</dbReference>
<dbReference type="Proteomes" id="UP000002519">
    <property type="component" value="Chromosome"/>
</dbReference>
<dbReference type="GO" id="GO:0005886">
    <property type="term" value="C:plasma membrane"/>
    <property type="evidence" value="ECO:0007669"/>
    <property type="project" value="UniProtKB-SubCell"/>
</dbReference>
<dbReference type="InterPro" id="IPR010295">
    <property type="entry name" value="DUF898"/>
</dbReference>
<dbReference type="Pfam" id="PF05987">
    <property type="entry name" value="DUF898"/>
    <property type="match status" value="1"/>
</dbReference>
<reference key="1">
    <citation type="journal article" date="2001" name="Nature">
        <title>Genome sequence of enterohaemorrhagic Escherichia coli O157:H7.</title>
        <authorList>
            <person name="Perna N.T."/>
            <person name="Plunkett G. III"/>
            <person name="Burland V."/>
            <person name="Mau B."/>
            <person name="Glasner J.D."/>
            <person name="Rose D.J."/>
            <person name="Mayhew G.F."/>
            <person name="Evans P.S."/>
            <person name="Gregor J."/>
            <person name="Kirkpatrick H.A."/>
            <person name="Posfai G."/>
            <person name="Hackett J."/>
            <person name="Klink S."/>
            <person name="Boutin A."/>
            <person name="Shao Y."/>
            <person name="Miller L."/>
            <person name="Grotbeck E.J."/>
            <person name="Davis N.W."/>
            <person name="Lim A."/>
            <person name="Dimalanta E.T."/>
            <person name="Potamousis K."/>
            <person name="Apodaca J."/>
            <person name="Anantharaman T.S."/>
            <person name="Lin J."/>
            <person name="Yen G."/>
            <person name="Schwartz D.C."/>
            <person name="Welch R.A."/>
            <person name="Blattner F.R."/>
        </authorList>
    </citation>
    <scope>NUCLEOTIDE SEQUENCE [LARGE SCALE GENOMIC DNA]</scope>
    <source>
        <strain>O157:H7 / EDL933 / ATCC 700927 / EHEC</strain>
    </source>
</reference>
<reference key="2">
    <citation type="journal article" date="2001" name="DNA Res.">
        <title>Complete genome sequence of enterohemorrhagic Escherichia coli O157:H7 and genomic comparison with a laboratory strain K-12.</title>
        <authorList>
            <person name="Hayashi T."/>
            <person name="Makino K."/>
            <person name="Ohnishi M."/>
            <person name="Kurokawa K."/>
            <person name="Ishii K."/>
            <person name="Yokoyama K."/>
            <person name="Han C.-G."/>
            <person name="Ohtsubo E."/>
            <person name="Nakayama K."/>
            <person name="Murata T."/>
            <person name="Tanaka M."/>
            <person name="Tobe T."/>
            <person name="Iida T."/>
            <person name="Takami H."/>
            <person name="Honda T."/>
            <person name="Sasakawa C."/>
            <person name="Ogasawara N."/>
            <person name="Yasunaga T."/>
            <person name="Kuhara S."/>
            <person name="Shiba T."/>
            <person name="Hattori M."/>
            <person name="Shinagawa H."/>
        </authorList>
    </citation>
    <scope>NUCLEOTIDE SEQUENCE [LARGE SCALE GENOMIC DNA]</scope>
    <source>
        <strain>O157:H7 / Sakai / RIMD 0509952 / EHEC</strain>
    </source>
</reference>
<proteinExistence type="inferred from homology"/>
<comment type="subcellular location">
    <subcellularLocation>
        <location evidence="1">Cell inner membrane</location>
        <topology evidence="1">Multi-pass membrane protein</topology>
    </subcellularLocation>
</comment>
<comment type="sequence caution" evidence="3">
    <conflict type="erroneous initiation">
        <sequence resource="EMBL-CDS" id="AAG59456"/>
    </conflict>
</comment>
<evidence type="ECO:0000250" key="1"/>
<evidence type="ECO:0000255" key="2"/>
<evidence type="ECO:0000305" key="3"/>
<protein>
    <recommendedName>
        <fullName>Inner membrane protein YjgN</fullName>
    </recommendedName>
</protein>
<organism>
    <name type="scientific">Escherichia coli O157:H7</name>
    <dbReference type="NCBI Taxonomy" id="83334"/>
    <lineage>
        <taxon>Bacteria</taxon>
        <taxon>Pseudomonadati</taxon>
        <taxon>Pseudomonadota</taxon>
        <taxon>Gammaproteobacteria</taxon>
        <taxon>Enterobacterales</taxon>
        <taxon>Enterobacteriaceae</taxon>
        <taxon>Escherichia</taxon>
    </lineage>
</organism>
<accession>P58219</accession>
<sequence length="398" mass="44817">MAQVINEMDVPSHSFVFHGTGERYFLICVVNVLLTIITLGIYLPWALMKCKRYLYANMEVNGQRFSYGITGGNVFFSCLVFVFFYFAILMTVSADMPLIGCVLTLSLLVLLIFMAAKGLRYQALMTSLNGVRFSFNCSMKGVWWVTFFLPILMAIGMGTVFFISTKMLHANSSSSVIVSVVLMAIVGIVSIGIFNGTLYSLVMSFLWSNTSFGIHRFKVKLDTAYCIKYAILAFLALLPFLAVAGYIIFDQILNAYDSSVYANDDIENLQQFMEMQRKMIIAQLIYYFGIAVSTSYLTVSLRNHFMSNLSLNDGRIRFRSTLTYHGMLYRMCALVVISGITGGLAYPLLKIWMIDWQAKNTYLLGDLDDLPLINKEEQPDKGFLASISRGIMPSLPFL</sequence>
<feature type="chain" id="PRO_0000169769" description="Inner membrane protein YjgN">
    <location>
        <begin position="1"/>
        <end position="398"/>
    </location>
</feature>
<feature type="topological domain" description="Cytoplasmic" evidence="2">
    <location>
        <begin position="1"/>
        <end position="24"/>
    </location>
</feature>
<feature type="transmembrane region" description="Helical" evidence="2">
    <location>
        <begin position="25"/>
        <end position="45"/>
    </location>
</feature>
<feature type="topological domain" description="Periplasmic" evidence="2">
    <location>
        <begin position="46"/>
        <end position="73"/>
    </location>
</feature>
<feature type="transmembrane region" description="Helical" evidence="2">
    <location>
        <begin position="74"/>
        <end position="94"/>
    </location>
</feature>
<feature type="topological domain" description="Cytoplasmic" evidence="2">
    <location>
        <position position="95"/>
    </location>
</feature>
<feature type="transmembrane region" description="Helical" evidence="2">
    <location>
        <begin position="96"/>
        <end position="116"/>
    </location>
</feature>
<feature type="topological domain" description="Periplasmic" evidence="2">
    <location>
        <begin position="117"/>
        <end position="142"/>
    </location>
</feature>
<feature type="transmembrane region" description="Helical" evidence="2">
    <location>
        <begin position="143"/>
        <end position="163"/>
    </location>
</feature>
<feature type="topological domain" description="Cytoplasmic" evidence="2">
    <location>
        <begin position="164"/>
        <end position="175"/>
    </location>
</feature>
<feature type="transmembrane region" description="Helical" evidence="2">
    <location>
        <begin position="176"/>
        <end position="196"/>
    </location>
</feature>
<feature type="topological domain" description="Periplasmic" evidence="2">
    <location>
        <begin position="197"/>
        <end position="228"/>
    </location>
</feature>
<feature type="transmembrane region" description="Helical" evidence="2">
    <location>
        <begin position="229"/>
        <end position="249"/>
    </location>
</feature>
<feature type="topological domain" description="Cytoplasmic" evidence="2">
    <location>
        <begin position="250"/>
        <end position="278"/>
    </location>
</feature>
<feature type="transmembrane region" description="Helical" evidence="2">
    <location>
        <begin position="279"/>
        <end position="299"/>
    </location>
</feature>
<feature type="topological domain" description="Periplasmic" evidence="2">
    <location>
        <begin position="300"/>
        <end position="333"/>
    </location>
</feature>
<feature type="transmembrane region" description="Helical" evidence="2">
    <location>
        <begin position="334"/>
        <end position="354"/>
    </location>
</feature>
<feature type="topological domain" description="Cytoplasmic" evidence="2">
    <location>
        <begin position="355"/>
        <end position="398"/>
    </location>
</feature>
<name>YJGN_ECO57</name>
<keyword id="KW-0997">Cell inner membrane</keyword>
<keyword id="KW-1003">Cell membrane</keyword>
<keyword id="KW-0472">Membrane</keyword>
<keyword id="KW-1185">Reference proteome</keyword>
<keyword id="KW-0812">Transmembrane</keyword>
<keyword id="KW-1133">Transmembrane helix</keyword>
<gene>
    <name type="primary">yjgN</name>
    <name type="ordered locus">Z5869</name>
    <name type="ordered locus">ECs5234</name>
</gene>